<proteinExistence type="predicted"/>
<accession>Q58121</accession>
<reference key="1">
    <citation type="journal article" date="1996" name="Science">
        <title>Complete genome sequence of the methanogenic archaeon, Methanococcus jannaschii.</title>
        <authorList>
            <person name="Bult C.J."/>
            <person name="White O."/>
            <person name="Olsen G.J."/>
            <person name="Zhou L."/>
            <person name="Fleischmann R.D."/>
            <person name="Sutton G.G."/>
            <person name="Blake J.A."/>
            <person name="FitzGerald L.M."/>
            <person name="Clayton R.A."/>
            <person name="Gocayne J.D."/>
            <person name="Kerlavage A.R."/>
            <person name="Dougherty B.A."/>
            <person name="Tomb J.-F."/>
            <person name="Adams M.D."/>
            <person name="Reich C.I."/>
            <person name="Overbeek R."/>
            <person name="Kirkness E.F."/>
            <person name="Weinstock K.G."/>
            <person name="Merrick J.M."/>
            <person name="Glodek A."/>
            <person name="Scott J.L."/>
            <person name="Geoghagen N.S.M."/>
            <person name="Weidman J.F."/>
            <person name="Fuhrmann J.L."/>
            <person name="Nguyen D."/>
            <person name="Utterback T.R."/>
            <person name="Kelley J.M."/>
            <person name="Peterson J.D."/>
            <person name="Sadow P.W."/>
            <person name="Hanna M.C."/>
            <person name="Cotton M.D."/>
            <person name="Roberts K.M."/>
            <person name="Hurst M.A."/>
            <person name="Kaine B.P."/>
            <person name="Borodovsky M."/>
            <person name="Klenk H.-P."/>
            <person name="Fraser C.M."/>
            <person name="Smith H.O."/>
            <person name="Woese C.R."/>
            <person name="Venter J.C."/>
        </authorList>
    </citation>
    <scope>NUCLEOTIDE SEQUENCE [LARGE SCALE GENOMIC DNA]</scope>
    <source>
        <strain>ATCC 43067 / DSM 2661 / JAL-1 / JCM 10045 / NBRC 100440</strain>
    </source>
</reference>
<protein>
    <recommendedName>
        <fullName>Uncharacterized protein MJ0711</fullName>
    </recommendedName>
</protein>
<dbReference type="EMBL" id="L77117">
    <property type="protein sequence ID" value="AAB98714.1"/>
    <property type="molecule type" value="Genomic_DNA"/>
</dbReference>
<dbReference type="PIR" id="G64388">
    <property type="entry name" value="G64388"/>
</dbReference>
<dbReference type="RefSeq" id="WP_010870217.1">
    <property type="nucleotide sequence ID" value="NC_000909.1"/>
</dbReference>
<dbReference type="SMR" id="Q58121"/>
<dbReference type="PaxDb" id="243232-MJ_0711"/>
<dbReference type="EnsemblBacteria" id="AAB98714">
    <property type="protein sequence ID" value="AAB98714"/>
    <property type="gene ID" value="MJ_0711"/>
</dbReference>
<dbReference type="GeneID" id="1451589"/>
<dbReference type="KEGG" id="mja:MJ_0711"/>
<dbReference type="eggNOG" id="arCOG07502">
    <property type="taxonomic scope" value="Archaea"/>
</dbReference>
<dbReference type="HOGENOM" id="CLU_867711_0_0_2"/>
<dbReference type="InParanoid" id="Q58121"/>
<dbReference type="OrthoDB" id="64789at2157"/>
<dbReference type="Proteomes" id="UP000000805">
    <property type="component" value="Chromosome"/>
</dbReference>
<dbReference type="GO" id="GO:0016020">
    <property type="term" value="C:membrane"/>
    <property type="evidence" value="ECO:0007669"/>
    <property type="project" value="UniProtKB-SubCell"/>
</dbReference>
<keyword id="KW-0472">Membrane</keyword>
<keyword id="KW-1185">Reference proteome</keyword>
<keyword id="KW-0812">Transmembrane</keyword>
<keyword id="KW-1133">Transmembrane helix</keyword>
<organism>
    <name type="scientific">Methanocaldococcus jannaschii (strain ATCC 43067 / DSM 2661 / JAL-1 / JCM 10045 / NBRC 100440)</name>
    <name type="common">Methanococcus jannaschii</name>
    <dbReference type="NCBI Taxonomy" id="243232"/>
    <lineage>
        <taxon>Archaea</taxon>
        <taxon>Methanobacteriati</taxon>
        <taxon>Methanobacteriota</taxon>
        <taxon>Methanomada group</taxon>
        <taxon>Methanococci</taxon>
        <taxon>Methanococcales</taxon>
        <taxon>Methanocaldococcaceae</taxon>
        <taxon>Methanocaldococcus</taxon>
    </lineage>
</organism>
<sequence length="322" mass="38631">MDSVLSGKIVQILVGYLKENIYSEQMIKLRMKRICSYEEFLPTYSLIERITEESKEIAIKVYEKNIIVEIVKDFKNKDLIELFELKEELFDEALSYLKKYNADKFLESYTLYCFSEYSDPDSFIKENKSILTKLLRNQYEEVPEEYINELLKSKIKYSTKDLIILDWDNGIILDKNEDFWEEVDIIELACIRVLNLRVFDSMLSEAIQYFTRLQWEKLGYFKLKKLSKDLYLQRISYISYFDSIENVLMLYGDRYYAELYERLCKIFYVSEWIKRVEKKMEMISDIYTMTRQHLTEFYGLLLEGTIVALILLEIILALAKIV</sequence>
<gene>
    <name type="ordered locus">MJ0711</name>
</gene>
<comment type="subcellular location">
    <subcellularLocation>
        <location evidence="2">Membrane</location>
        <topology evidence="2">Single-pass membrane protein</topology>
    </subcellularLocation>
</comment>
<evidence type="ECO:0000255" key="1"/>
<evidence type="ECO:0000305" key="2"/>
<feature type="chain" id="PRO_0000106999" description="Uncharacterized protein MJ0711">
    <location>
        <begin position="1"/>
        <end position="322"/>
    </location>
</feature>
<feature type="transmembrane region" description="Helical" evidence="1">
    <location>
        <begin position="299"/>
        <end position="319"/>
    </location>
</feature>
<name>Y711_METJA</name>